<keyword id="KW-0378">Hydrolase</keyword>
<keyword id="KW-0574">Periplasm</keyword>
<keyword id="KW-0732">Signal</keyword>
<feature type="signal peptide" evidence="1">
    <location>
        <begin position="1"/>
        <end position="25"/>
    </location>
</feature>
<feature type="chain" id="PRO_0000380570" description="Lipopolysaccharide core heptose(II)-phosphate phosphatase">
    <location>
        <begin position="26"/>
        <end position="200"/>
    </location>
</feature>
<gene>
    <name evidence="1" type="primary">ais</name>
    <name type="ordered locus">ECIAI1_2327</name>
</gene>
<proteinExistence type="inferred from homology"/>
<accession>B7M5T4</accession>
<name>AIS_ECO8A</name>
<reference key="1">
    <citation type="journal article" date="2009" name="PLoS Genet.">
        <title>Organised genome dynamics in the Escherichia coli species results in highly diverse adaptive paths.</title>
        <authorList>
            <person name="Touchon M."/>
            <person name="Hoede C."/>
            <person name="Tenaillon O."/>
            <person name="Barbe V."/>
            <person name="Baeriswyl S."/>
            <person name="Bidet P."/>
            <person name="Bingen E."/>
            <person name="Bonacorsi S."/>
            <person name="Bouchier C."/>
            <person name="Bouvet O."/>
            <person name="Calteau A."/>
            <person name="Chiapello H."/>
            <person name="Clermont O."/>
            <person name="Cruveiller S."/>
            <person name="Danchin A."/>
            <person name="Diard M."/>
            <person name="Dossat C."/>
            <person name="Karoui M.E."/>
            <person name="Frapy E."/>
            <person name="Garry L."/>
            <person name="Ghigo J.M."/>
            <person name="Gilles A.M."/>
            <person name="Johnson J."/>
            <person name="Le Bouguenec C."/>
            <person name="Lescat M."/>
            <person name="Mangenot S."/>
            <person name="Martinez-Jehanne V."/>
            <person name="Matic I."/>
            <person name="Nassif X."/>
            <person name="Oztas S."/>
            <person name="Petit M.A."/>
            <person name="Pichon C."/>
            <person name="Rouy Z."/>
            <person name="Ruf C.S."/>
            <person name="Schneider D."/>
            <person name="Tourret J."/>
            <person name="Vacherie B."/>
            <person name="Vallenet D."/>
            <person name="Medigue C."/>
            <person name="Rocha E.P.C."/>
            <person name="Denamur E."/>
        </authorList>
    </citation>
    <scope>NUCLEOTIDE SEQUENCE [LARGE SCALE GENOMIC DNA]</scope>
    <source>
        <strain>IAI1</strain>
    </source>
</reference>
<protein>
    <recommendedName>
        <fullName evidence="1">Lipopolysaccharide core heptose(II)-phosphate phosphatase</fullName>
        <ecNumber evidence="1">3.1.3.-</ecNumber>
    </recommendedName>
</protein>
<dbReference type="EC" id="3.1.3.-" evidence="1"/>
<dbReference type="EMBL" id="CU928160">
    <property type="protein sequence ID" value="CAQ99171.1"/>
    <property type="molecule type" value="Genomic_DNA"/>
</dbReference>
<dbReference type="RefSeq" id="WP_001297077.1">
    <property type="nucleotide sequence ID" value="NC_011741.1"/>
</dbReference>
<dbReference type="SMR" id="B7M5T4"/>
<dbReference type="GeneID" id="93774922"/>
<dbReference type="KEGG" id="ecr:ECIAI1_2327"/>
<dbReference type="HOGENOM" id="CLU_106705_1_0_6"/>
<dbReference type="UniPathway" id="UPA00451"/>
<dbReference type="GO" id="GO:0042597">
    <property type="term" value="C:periplasmic space"/>
    <property type="evidence" value="ECO:0007669"/>
    <property type="project" value="UniProtKB-SubCell"/>
</dbReference>
<dbReference type="GO" id="GO:0016791">
    <property type="term" value="F:phosphatase activity"/>
    <property type="evidence" value="ECO:0007669"/>
    <property type="project" value="UniProtKB-UniRule"/>
</dbReference>
<dbReference type="GO" id="GO:0008653">
    <property type="term" value="P:lipopolysaccharide metabolic process"/>
    <property type="evidence" value="ECO:0007669"/>
    <property type="project" value="UniProtKB-UniRule"/>
</dbReference>
<dbReference type="CDD" id="cd07040">
    <property type="entry name" value="HP"/>
    <property type="match status" value="1"/>
</dbReference>
<dbReference type="Gene3D" id="3.40.50.1240">
    <property type="entry name" value="Phosphoglycerate mutase-like"/>
    <property type="match status" value="1"/>
</dbReference>
<dbReference type="HAMAP" id="MF_01868">
    <property type="entry name" value="Ais"/>
    <property type="match status" value="1"/>
</dbReference>
<dbReference type="InterPro" id="IPR013078">
    <property type="entry name" value="His_Pase_superF_clade-1"/>
</dbReference>
<dbReference type="InterPro" id="IPR029033">
    <property type="entry name" value="His_PPase_superfam"/>
</dbReference>
<dbReference type="InterPro" id="IPR011310">
    <property type="entry name" value="LipoPS_heptP_Pase"/>
</dbReference>
<dbReference type="NCBIfam" id="NF011945">
    <property type="entry name" value="PRK15416.1"/>
    <property type="match status" value="1"/>
</dbReference>
<dbReference type="Pfam" id="PF00300">
    <property type="entry name" value="His_Phos_1"/>
    <property type="match status" value="1"/>
</dbReference>
<dbReference type="PIRSF" id="PIRSF011416">
    <property type="entry name" value="Ais-TraG-AfrS"/>
    <property type="match status" value="1"/>
</dbReference>
<dbReference type="SUPFAM" id="SSF53254">
    <property type="entry name" value="Phosphoglycerate mutase-like"/>
    <property type="match status" value="1"/>
</dbReference>
<sequence>MLAFCRSSLKSKKYFIILLALAAIAGLGTHAAWSSNGLPRIDNKTLARLAQQHPVVVLFRHAERCDRSTNQCLSDKTGITVKGTQDARELGNAFSADIPDFDLYSSNTVRTIQSATWFSAGKKLTVDKRLLQCGNEIYSAIKDLQSKAPDKNIVIFTHNHCLTYIAKNKRDATFKPDYLDGLVMHVEKGKVYLDGEFVNH</sequence>
<organism>
    <name type="scientific">Escherichia coli O8 (strain IAI1)</name>
    <dbReference type="NCBI Taxonomy" id="585034"/>
    <lineage>
        <taxon>Bacteria</taxon>
        <taxon>Pseudomonadati</taxon>
        <taxon>Pseudomonadota</taxon>
        <taxon>Gammaproteobacteria</taxon>
        <taxon>Enterobacterales</taxon>
        <taxon>Enterobacteriaceae</taxon>
        <taxon>Escherichia</taxon>
    </lineage>
</organism>
<evidence type="ECO:0000255" key="1">
    <source>
        <dbReference type="HAMAP-Rule" id="MF_01868"/>
    </source>
</evidence>
<comment type="function">
    <text evidence="1">Catalyzes the dephosphorylation of heptose(II) of the outer membrane lipopolysaccharide core.</text>
</comment>
<comment type="pathway">
    <text evidence="1">Bacterial outer membrane biogenesis; lipopolysaccharide metabolism.</text>
</comment>
<comment type="subcellular location">
    <subcellularLocation>
        <location evidence="1">Periplasm</location>
    </subcellularLocation>
</comment>
<comment type="similarity">
    <text evidence="1">Belongs to the phosphoglycerate mutase family. Ais subfamily.</text>
</comment>